<name>SP5G1_LISIN</name>
<keyword id="KW-0131">Cell cycle</keyword>
<keyword id="KW-0132">Cell division</keyword>
<keyword id="KW-0717">Septation</keyword>
<gene>
    <name evidence="1" type="primary">spoVG1</name>
    <name type="ordered locus">lin0235</name>
</gene>
<organism>
    <name type="scientific">Listeria innocua serovar 6a (strain ATCC BAA-680 / CLIP 11262)</name>
    <dbReference type="NCBI Taxonomy" id="272626"/>
    <lineage>
        <taxon>Bacteria</taxon>
        <taxon>Bacillati</taxon>
        <taxon>Bacillota</taxon>
        <taxon>Bacilli</taxon>
        <taxon>Bacillales</taxon>
        <taxon>Listeriaceae</taxon>
        <taxon>Listeria</taxon>
    </lineage>
</organism>
<dbReference type="EMBL" id="AL596164">
    <property type="protein sequence ID" value="CAC95468.1"/>
    <property type="molecule type" value="Genomic_DNA"/>
</dbReference>
<dbReference type="PIR" id="AD1462">
    <property type="entry name" value="AD1462"/>
</dbReference>
<dbReference type="SMR" id="Q92F71"/>
<dbReference type="STRING" id="272626.gene:17564547"/>
<dbReference type="KEGG" id="lin:lin0235"/>
<dbReference type="eggNOG" id="COG2088">
    <property type="taxonomic scope" value="Bacteria"/>
</dbReference>
<dbReference type="HOGENOM" id="CLU_103669_2_1_9"/>
<dbReference type="OrthoDB" id="9796286at2"/>
<dbReference type="Proteomes" id="UP000002513">
    <property type="component" value="Chromosome"/>
</dbReference>
<dbReference type="GO" id="GO:0000917">
    <property type="term" value="P:division septum assembly"/>
    <property type="evidence" value="ECO:0007669"/>
    <property type="project" value="UniProtKB-KW"/>
</dbReference>
<dbReference type="GO" id="GO:0030435">
    <property type="term" value="P:sporulation resulting in formation of a cellular spore"/>
    <property type="evidence" value="ECO:0007669"/>
    <property type="project" value="InterPro"/>
</dbReference>
<dbReference type="FunFam" id="3.30.1120.40:FF:000001">
    <property type="entry name" value="Putative septation protein SpoVG"/>
    <property type="match status" value="1"/>
</dbReference>
<dbReference type="Gene3D" id="3.30.1120.40">
    <property type="entry name" value="Stage V sporulation protein G"/>
    <property type="match status" value="1"/>
</dbReference>
<dbReference type="HAMAP" id="MF_00819">
    <property type="entry name" value="SpoVG"/>
    <property type="match status" value="1"/>
</dbReference>
<dbReference type="InterPro" id="IPR007170">
    <property type="entry name" value="SpoVG"/>
</dbReference>
<dbReference type="InterPro" id="IPR036751">
    <property type="entry name" value="SpoVG_sf"/>
</dbReference>
<dbReference type="NCBIfam" id="NF009749">
    <property type="entry name" value="PRK13259.1"/>
    <property type="match status" value="1"/>
</dbReference>
<dbReference type="PANTHER" id="PTHR38429">
    <property type="entry name" value="SEPTATION PROTEIN SPOVG-RELATED"/>
    <property type="match status" value="1"/>
</dbReference>
<dbReference type="PANTHER" id="PTHR38429:SF1">
    <property type="entry name" value="SEPTATION PROTEIN SPOVG-RELATED"/>
    <property type="match status" value="1"/>
</dbReference>
<dbReference type="Pfam" id="PF04026">
    <property type="entry name" value="SpoVG"/>
    <property type="match status" value="1"/>
</dbReference>
<dbReference type="SUPFAM" id="SSF160537">
    <property type="entry name" value="SpoVG-like"/>
    <property type="match status" value="1"/>
</dbReference>
<proteinExistence type="inferred from homology"/>
<evidence type="ECO:0000255" key="1">
    <source>
        <dbReference type="HAMAP-Rule" id="MF_00819"/>
    </source>
</evidence>
<reference key="1">
    <citation type="journal article" date="2001" name="Science">
        <title>Comparative genomics of Listeria species.</title>
        <authorList>
            <person name="Glaser P."/>
            <person name="Frangeul L."/>
            <person name="Buchrieser C."/>
            <person name="Rusniok C."/>
            <person name="Amend A."/>
            <person name="Baquero F."/>
            <person name="Berche P."/>
            <person name="Bloecker H."/>
            <person name="Brandt P."/>
            <person name="Chakraborty T."/>
            <person name="Charbit A."/>
            <person name="Chetouani F."/>
            <person name="Couve E."/>
            <person name="de Daruvar A."/>
            <person name="Dehoux P."/>
            <person name="Domann E."/>
            <person name="Dominguez-Bernal G."/>
            <person name="Duchaud E."/>
            <person name="Durant L."/>
            <person name="Dussurget O."/>
            <person name="Entian K.-D."/>
            <person name="Fsihi H."/>
            <person name="Garcia-del Portillo F."/>
            <person name="Garrido P."/>
            <person name="Gautier L."/>
            <person name="Goebel W."/>
            <person name="Gomez-Lopez N."/>
            <person name="Hain T."/>
            <person name="Hauf J."/>
            <person name="Jackson D."/>
            <person name="Jones L.-M."/>
            <person name="Kaerst U."/>
            <person name="Kreft J."/>
            <person name="Kuhn M."/>
            <person name="Kunst F."/>
            <person name="Kurapkat G."/>
            <person name="Madueno E."/>
            <person name="Maitournam A."/>
            <person name="Mata Vicente J."/>
            <person name="Ng E."/>
            <person name="Nedjari H."/>
            <person name="Nordsiek G."/>
            <person name="Novella S."/>
            <person name="de Pablos B."/>
            <person name="Perez-Diaz J.-C."/>
            <person name="Purcell R."/>
            <person name="Remmel B."/>
            <person name="Rose M."/>
            <person name="Schlueter T."/>
            <person name="Simoes N."/>
            <person name="Tierrez A."/>
            <person name="Vazquez-Boland J.-A."/>
            <person name="Voss H."/>
            <person name="Wehland J."/>
            <person name="Cossart P."/>
        </authorList>
    </citation>
    <scope>NUCLEOTIDE SEQUENCE [LARGE SCALE GENOMIC DNA]</scope>
    <source>
        <strain>ATCC BAA-680 / CLIP 11262</strain>
    </source>
</reference>
<comment type="function">
    <text evidence="1">Could be involved in septation.</text>
</comment>
<comment type="similarity">
    <text evidence="1">Belongs to the SpoVG family.</text>
</comment>
<protein>
    <recommendedName>
        <fullName evidence="1">Putative septation protein SpoVG 1</fullName>
    </recommendedName>
</protein>
<sequence length="102" mass="11242">MEITDVRLRRVETDGRMKAISSITIDGEFVIHDIRVIDGNEGLFVAMPSKRTPDGEFRDIAHPINSGTRAKIQEAVLAAYEVADEPAVNEESSADESVVEEN</sequence>
<feature type="chain" id="PRO_0000157198" description="Putative septation protein SpoVG 1">
    <location>
        <begin position="1"/>
        <end position="102"/>
    </location>
</feature>
<accession>Q92F71</accession>